<comment type="similarity">
    <text evidence="1">Belongs to the bacterial ribosomal protein bL32 family.</text>
</comment>
<evidence type="ECO:0000255" key="1">
    <source>
        <dbReference type="HAMAP-Rule" id="MF_00340"/>
    </source>
</evidence>
<evidence type="ECO:0000256" key="2">
    <source>
        <dbReference type="SAM" id="MobiDB-lite"/>
    </source>
</evidence>
<evidence type="ECO:0000305" key="3"/>
<feature type="chain" id="PRO_0000296429" description="Large ribosomal subunit protein bL32">
    <location>
        <begin position="1"/>
        <end position="60"/>
    </location>
</feature>
<feature type="region of interest" description="Disordered" evidence="2">
    <location>
        <begin position="1"/>
        <end position="60"/>
    </location>
</feature>
<feature type="compositionally biased region" description="Basic residues" evidence="2">
    <location>
        <begin position="49"/>
        <end position="60"/>
    </location>
</feature>
<dbReference type="EMBL" id="AM167904">
    <property type="protein sequence ID" value="CAJ48726.1"/>
    <property type="molecule type" value="Genomic_DNA"/>
</dbReference>
<dbReference type="RefSeq" id="WP_012416801.1">
    <property type="nucleotide sequence ID" value="NC_010645.1"/>
</dbReference>
<dbReference type="SMR" id="Q2KUK7"/>
<dbReference type="STRING" id="360910.BAV1117"/>
<dbReference type="GeneID" id="92935689"/>
<dbReference type="KEGG" id="bav:BAV1117"/>
<dbReference type="eggNOG" id="COG0333">
    <property type="taxonomic scope" value="Bacteria"/>
</dbReference>
<dbReference type="HOGENOM" id="CLU_129084_2_1_4"/>
<dbReference type="OrthoDB" id="9801927at2"/>
<dbReference type="Proteomes" id="UP000001977">
    <property type="component" value="Chromosome"/>
</dbReference>
<dbReference type="GO" id="GO:0015934">
    <property type="term" value="C:large ribosomal subunit"/>
    <property type="evidence" value="ECO:0007669"/>
    <property type="project" value="InterPro"/>
</dbReference>
<dbReference type="GO" id="GO:0003735">
    <property type="term" value="F:structural constituent of ribosome"/>
    <property type="evidence" value="ECO:0007669"/>
    <property type="project" value="InterPro"/>
</dbReference>
<dbReference type="GO" id="GO:0006412">
    <property type="term" value="P:translation"/>
    <property type="evidence" value="ECO:0007669"/>
    <property type="project" value="UniProtKB-UniRule"/>
</dbReference>
<dbReference type="HAMAP" id="MF_00340">
    <property type="entry name" value="Ribosomal_bL32"/>
    <property type="match status" value="1"/>
</dbReference>
<dbReference type="InterPro" id="IPR002677">
    <property type="entry name" value="Ribosomal_bL32"/>
</dbReference>
<dbReference type="InterPro" id="IPR044957">
    <property type="entry name" value="Ribosomal_bL32_bact"/>
</dbReference>
<dbReference type="InterPro" id="IPR011332">
    <property type="entry name" value="Ribosomal_zn-bd"/>
</dbReference>
<dbReference type="NCBIfam" id="TIGR01031">
    <property type="entry name" value="rpmF_bact"/>
    <property type="match status" value="1"/>
</dbReference>
<dbReference type="PANTHER" id="PTHR35534">
    <property type="entry name" value="50S RIBOSOMAL PROTEIN L32"/>
    <property type="match status" value="1"/>
</dbReference>
<dbReference type="PANTHER" id="PTHR35534:SF1">
    <property type="entry name" value="LARGE RIBOSOMAL SUBUNIT PROTEIN BL32"/>
    <property type="match status" value="1"/>
</dbReference>
<dbReference type="Pfam" id="PF01783">
    <property type="entry name" value="Ribosomal_L32p"/>
    <property type="match status" value="1"/>
</dbReference>
<dbReference type="SUPFAM" id="SSF57829">
    <property type="entry name" value="Zn-binding ribosomal proteins"/>
    <property type="match status" value="1"/>
</dbReference>
<sequence>MAVQQNKKSPSKRGMHRSHDFLVNPPTAIEPTTGESHLRHHISPNGFYRGRKILKTKADE</sequence>
<gene>
    <name evidence="1" type="primary">rpmF</name>
    <name type="ordered locus">BAV1117</name>
</gene>
<protein>
    <recommendedName>
        <fullName evidence="1">Large ribosomal subunit protein bL32</fullName>
    </recommendedName>
    <alternativeName>
        <fullName evidence="3">50S ribosomal protein L32</fullName>
    </alternativeName>
</protein>
<reference key="1">
    <citation type="journal article" date="2006" name="J. Bacteriol.">
        <title>Comparison of the genome sequence of the poultry pathogen Bordetella avium with those of B. bronchiseptica, B. pertussis, and B. parapertussis reveals extensive diversity in surface structures associated with host interaction.</title>
        <authorList>
            <person name="Sebaihia M."/>
            <person name="Preston A."/>
            <person name="Maskell D.J."/>
            <person name="Kuzmiak H."/>
            <person name="Connell T.D."/>
            <person name="King N.D."/>
            <person name="Orndorff P.E."/>
            <person name="Miyamoto D.M."/>
            <person name="Thomson N.R."/>
            <person name="Harris D."/>
            <person name="Goble A."/>
            <person name="Lord A."/>
            <person name="Murphy L."/>
            <person name="Quail M.A."/>
            <person name="Rutter S."/>
            <person name="Squares R."/>
            <person name="Squares S."/>
            <person name="Woodward J."/>
            <person name="Parkhill J."/>
            <person name="Temple L.M."/>
        </authorList>
    </citation>
    <scope>NUCLEOTIDE SEQUENCE [LARGE SCALE GENOMIC DNA]</scope>
    <source>
        <strain>197N</strain>
    </source>
</reference>
<name>RL32_BORA1</name>
<keyword id="KW-1185">Reference proteome</keyword>
<keyword id="KW-0687">Ribonucleoprotein</keyword>
<keyword id="KW-0689">Ribosomal protein</keyword>
<accession>Q2KUK7</accession>
<proteinExistence type="inferred from homology"/>
<organism>
    <name type="scientific">Bordetella avium (strain 197N)</name>
    <dbReference type="NCBI Taxonomy" id="360910"/>
    <lineage>
        <taxon>Bacteria</taxon>
        <taxon>Pseudomonadati</taxon>
        <taxon>Pseudomonadota</taxon>
        <taxon>Betaproteobacteria</taxon>
        <taxon>Burkholderiales</taxon>
        <taxon>Alcaligenaceae</taxon>
        <taxon>Bordetella</taxon>
    </lineage>
</organism>